<name>MURB2_BACCZ</name>
<proteinExistence type="inferred from homology"/>
<accession>Q631P8</accession>
<comment type="function">
    <text evidence="1">Cell wall formation.</text>
</comment>
<comment type="catalytic activity">
    <reaction evidence="1">
        <text>UDP-N-acetyl-alpha-D-muramate + NADP(+) = UDP-N-acetyl-3-O-(1-carboxyvinyl)-alpha-D-glucosamine + NADPH + H(+)</text>
        <dbReference type="Rhea" id="RHEA:12248"/>
        <dbReference type="ChEBI" id="CHEBI:15378"/>
        <dbReference type="ChEBI" id="CHEBI:57783"/>
        <dbReference type="ChEBI" id="CHEBI:58349"/>
        <dbReference type="ChEBI" id="CHEBI:68483"/>
        <dbReference type="ChEBI" id="CHEBI:70757"/>
        <dbReference type="EC" id="1.3.1.98"/>
    </reaction>
</comment>
<comment type="cofactor">
    <cofactor evidence="1">
        <name>FAD</name>
        <dbReference type="ChEBI" id="CHEBI:57692"/>
    </cofactor>
</comment>
<comment type="pathway">
    <text evidence="1">Cell wall biogenesis; peptidoglycan biosynthesis.</text>
</comment>
<comment type="subcellular location">
    <subcellularLocation>
        <location evidence="1">Cytoplasm</location>
    </subcellularLocation>
</comment>
<comment type="similarity">
    <text evidence="1">Belongs to the MurB family.</text>
</comment>
<reference key="1">
    <citation type="journal article" date="2006" name="J. Bacteriol.">
        <title>Pathogenomic sequence analysis of Bacillus cereus and Bacillus thuringiensis isolates closely related to Bacillus anthracis.</title>
        <authorList>
            <person name="Han C.S."/>
            <person name="Xie G."/>
            <person name="Challacombe J.F."/>
            <person name="Altherr M.R."/>
            <person name="Bhotika S.S."/>
            <person name="Bruce D."/>
            <person name="Campbell C.S."/>
            <person name="Campbell M.L."/>
            <person name="Chen J."/>
            <person name="Chertkov O."/>
            <person name="Cleland C."/>
            <person name="Dimitrijevic M."/>
            <person name="Doggett N.A."/>
            <person name="Fawcett J.J."/>
            <person name="Glavina T."/>
            <person name="Goodwin L.A."/>
            <person name="Hill K.K."/>
            <person name="Hitchcock P."/>
            <person name="Jackson P.J."/>
            <person name="Keim P."/>
            <person name="Kewalramani A.R."/>
            <person name="Longmire J."/>
            <person name="Lucas S."/>
            <person name="Malfatti S."/>
            <person name="McMurry K."/>
            <person name="Meincke L.J."/>
            <person name="Misra M."/>
            <person name="Moseman B.L."/>
            <person name="Mundt M."/>
            <person name="Munk A.C."/>
            <person name="Okinaka R.T."/>
            <person name="Parson-Quintana B."/>
            <person name="Reilly L.P."/>
            <person name="Richardson P."/>
            <person name="Robinson D.L."/>
            <person name="Rubin E."/>
            <person name="Saunders E."/>
            <person name="Tapia R."/>
            <person name="Tesmer J.G."/>
            <person name="Thayer N."/>
            <person name="Thompson L.S."/>
            <person name="Tice H."/>
            <person name="Ticknor L.O."/>
            <person name="Wills P.L."/>
            <person name="Brettin T.S."/>
            <person name="Gilna P."/>
        </authorList>
    </citation>
    <scope>NUCLEOTIDE SEQUENCE [LARGE SCALE GENOMIC DNA]</scope>
    <source>
        <strain>ZK / E33L</strain>
    </source>
</reference>
<sequence>MNMQEVYEYLSTVLPEGHVKQDEMLKNHTHIKVGGKADVFVAPTNYDEIQEVIKYANKYNIPVTFLGNGSNVIIKDGGIRGITVSLIHITGVTVTGTTIVAQCGAAIIDVSRIALDHNLTGLEFACGIPGSVGGALYMNAGAYGGEISFVLTEAVVMTGDGELRTLTKEAFEFGYRKSVFANNHYIILEARFELEEGVHEEIKAKMDDLTFKRESKQPLEYPSCGSVFKRPPNNFAGKLIQDSGLQGKRIGGVEVSLKHAGFMVNVDNGTAQDYIDLIHFVQKTVEEKFGVKLEREVRIIGEDKE</sequence>
<gene>
    <name evidence="1" type="primary">murB2</name>
    <name type="ordered locus">BCE33L4798</name>
</gene>
<keyword id="KW-0131">Cell cycle</keyword>
<keyword id="KW-0132">Cell division</keyword>
<keyword id="KW-0133">Cell shape</keyword>
<keyword id="KW-0961">Cell wall biogenesis/degradation</keyword>
<keyword id="KW-0963">Cytoplasm</keyword>
<keyword id="KW-0274">FAD</keyword>
<keyword id="KW-0285">Flavoprotein</keyword>
<keyword id="KW-0521">NADP</keyword>
<keyword id="KW-0560">Oxidoreductase</keyword>
<keyword id="KW-0573">Peptidoglycan synthesis</keyword>
<evidence type="ECO:0000255" key="1">
    <source>
        <dbReference type="HAMAP-Rule" id="MF_00037"/>
    </source>
</evidence>
<dbReference type="EC" id="1.3.1.98" evidence="1"/>
<dbReference type="EMBL" id="CP000001">
    <property type="protein sequence ID" value="AAU15479.1"/>
    <property type="molecule type" value="Genomic_DNA"/>
</dbReference>
<dbReference type="SMR" id="Q631P8"/>
<dbReference type="KEGG" id="bcz:BCE33L4798"/>
<dbReference type="PATRIC" id="fig|288681.22.peg.556"/>
<dbReference type="UniPathway" id="UPA00219"/>
<dbReference type="Proteomes" id="UP000002612">
    <property type="component" value="Chromosome"/>
</dbReference>
<dbReference type="GO" id="GO:0005829">
    <property type="term" value="C:cytosol"/>
    <property type="evidence" value="ECO:0007669"/>
    <property type="project" value="TreeGrafter"/>
</dbReference>
<dbReference type="GO" id="GO:0071949">
    <property type="term" value="F:FAD binding"/>
    <property type="evidence" value="ECO:0007669"/>
    <property type="project" value="InterPro"/>
</dbReference>
<dbReference type="GO" id="GO:0008762">
    <property type="term" value="F:UDP-N-acetylmuramate dehydrogenase activity"/>
    <property type="evidence" value="ECO:0007669"/>
    <property type="project" value="UniProtKB-UniRule"/>
</dbReference>
<dbReference type="GO" id="GO:0051301">
    <property type="term" value="P:cell division"/>
    <property type="evidence" value="ECO:0007669"/>
    <property type="project" value="UniProtKB-KW"/>
</dbReference>
<dbReference type="GO" id="GO:0071555">
    <property type="term" value="P:cell wall organization"/>
    <property type="evidence" value="ECO:0007669"/>
    <property type="project" value="UniProtKB-KW"/>
</dbReference>
<dbReference type="GO" id="GO:0009252">
    <property type="term" value="P:peptidoglycan biosynthetic process"/>
    <property type="evidence" value="ECO:0007669"/>
    <property type="project" value="UniProtKB-UniRule"/>
</dbReference>
<dbReference type="GO" id="GO:0008360">
    <property type="term" value="P:regulation of cell shape"/>
    <property type="evidence" value="ECO:0007669"/>
    <property type="project" value="UniProtKB-KW"/>
</dbReference>
<dbReference type="FunFam" id="3.30.465.10:FF:000019">
    <property type="entry name" value="UDP-N-acetylenolpyruvoylglucosamine reductase"/>
    <property type="match status" value="1"/>
</dbReference>
<dbReference type="FunFam" id="3.90.78.10:FF:000001">
    <property type="entry name" value="UDP-N-acetylenolpyruvoylglucosamine reductase"/>
    <property type="match status" value="1"/>
</dbReference>
<dbReference type="Gene3D" id="3.30.465.10">
    <property type="match status" value="1"/>
</dbReference>
<dbReference type="Gene3D" id="3.90.78.10">
    <property type="entry name" value="UDP-N-acetylenolpyruvoylglucosamine reductase, C-terminal domain"/>
    <property type="match status" value="1"/>
</dbReference>
<dbReference type="Gene3D" id="3.30.43.10">
    <property type="entry name" value="Uridine Diphospho-n-acetylenolpyruvylglucosamine Reductase, domain 2"/>
    <property type="match status" value="1"/>
</dbReference>
<dbReference type="HAMAP" id="MF_00037">
    <property type="entry name" value="MurB"/>
    <property type="match status" value="1"/>
</dbReference>
<dbReference type="InterPro" id="IPR016166">
    <property type="entry name" value="FAD-bd_PCMH"/>
</dbReference>
<dbReference type="InterPro" id="IPR036318">
    <property type="entry name" value="FAD-bd_PCMH-like_sf"/>
</dbReference>
<dbReference type="InterPro" id="IPR016167">
    <property type="entry name" value="FAD-bd_PCMH_sub1"/>
</dbReference>
<dbReference type="InterPro" id="IPR016169">
    <property type="entry name" value="FAD-bd_PCMH_sub2"/>
</dbReference>
<dbReference type="InterPro" id="IPR003170">
    <property type="entry name" value="MurB"/>
</dbReference>
<dbReference type="InterPro" id="IPR011601">
    <property type="entry name" value="MurB_C"/>
</dbReference>
<dbReference type="InterPro" id="IPR036635">
    <property type="entry name" value="MurB_C_sf"/>
</dbReference>
<dbReference type="InterPro" id="IPR006094">
    <property type="entry name" value="Oxid_FAD_bind_N"/>
</dbReference>
<dbReference type="NCBIfam" id="TIGR00179">
    <property type="entry name" value="murB"/>
    <property type="match status" value="1"/>
</dbReference>
<dbReference type="NCBIfam" id="NF010480">
    <property type="entry name" value="PRK13905.1"/>
    <property type="match status" value="1"/>
</dbReference>
<dbReference type="PANTHER" id="PTHR21071">
    <property type="entry name" value="UDP-N-ACETYLENOLPYRUVOYLGLUCOSAMINE REDUCTASE"/>
    <property type="match status" value="1"/>
</dbReference>
<dbReference type="PANTHER" id="PTHR21071:SF4">
    <property type="entry name" value="UDP-N-ACETYLENOLPYRUVOYLGLUCOSAMINE REDUCTASE"/>
    <property type="match status" value="1"/>
</dbReference>
<dbReference type="Pfam" id="PF01565">
    <property type="entry name" value="FAD_binding_4"/>
    <property type="match status" value="1"/>
</dbReference>
<dbReference type="Pfam" id="PF02873">
    <property type="entry name" value="MurB_C"/>
    <property type="match status" value="1"/>
</dbReference>
<dbReference type="SUPFAM" id="SSF56176">
    <property type="entry name" value="FAD-binding/transporter-associated domain-like"/>
    <property type="match status" value="1"/>
</dbReference>
<dbReference type="SUPFAM" id="SSF56194">
    <property type="entry name" value="Uridine diphospho-N-Acetylenolpyruvylglucosamine reductase, MurB, C-terminal domain"/>
    <property type="match status" value="1"/>
</dbReference>
<dbReference type="PROSITE" id="PS51387">
    <property type="entry name" value="FAD_PCMH"/>
    <property type="match status" value="1"/>
</dbReference>
<organism>
    <name type="scientific">Bacillus cereus (strain ZK / E33L)</name>
    <dbReference type="NCBI Taxonomy" id="288681"/>
    <lineage>
        <taxon>Bacteria</taxon>
        <taxon>Bacillati</taxon>
        <taxon>Bacillota</taxon>
        <taxon>Bacilli</taxon>
        <taxon>Bacillales</taxon>
        <taxon>Bacillaceae</taxon>
        <taxon>Bacillus</taxon>
        <taxon>Bacillus cereus group</taxon>
    </lineage>
</organism>
<protein>
    <recommendedName>
        <fullName evidence="1">UDP-N-acetylenolpyruvoylglucosamine reductase 2</fullName>
        <ecNumber evidence="1">1.3.1.98</ecNumber>
    </recommendedName>
    <alternativeName>
        <fullName evidence="1">UDP-N-acetylmuramate dehydrogenase 2</fullName>
    </alternativeName>
</protein>
<feature type="chain" id="PRO_0000224657" description="UDP-N-acetylenolpyruvoylglucosamine reductase 2">
    <location>
        <begin position="1"/>
        <end position="305"/>
    </location>
</feature>
<feature type="domain" description="FAD-binding PCMH-type" evidence="1">
    <location>
        <begin position="33"/>
        <end position="197"/>
    </location>
</feature>
<feature type="active site" evidence="1">
    <location>
        <position position="176"/>
    </location>
</feature>
<feature type="active site" description="Proton donor" evidence="1">
    <location>
        <position position="226"/>
    </location>
</feature>
<feature type="active site" evidence="1">
    <location>
        <position position="296"/>
    </location>
</feature>